<dbReference type="EC" id="4.1.99.17" evidence="1"/>
<dbReference type="EMBL" id="CP000076">
    <property type="protein sequence ID" value="AAY95947.1"/>
    <property type="molecule type" value="Genomic_DNA"/>
</dbReference>
<dbReference type="RefSeq" id="WP_011058911.1">
    <property type="nucleotide sequence ID" value="NC_004129.6"/>
</dbReference>
<dbReference type="SMR" id="Q4KJA1"/>
<dbReference type="STRING" id="220664.PFL_0538"/>
<dbReference type="KEGG" id="pfl:PFL_0538"/>
<dbReference type="PATRIC" id="fig|220664.5.peg.555"/>
<dbReference type="eggNOG" id="COG0422">
    <property type="taxonomic scope" value="Bacteria"/>
</dbReference>
<dbReference type="HOGENOM" id="CLU_013181_2_1_6"/>
<dbReference type="UniPathway" id="UPA00060"/>
<dbReference type="Proteomes" id="UP000008540">
    <property type="component" value="Chromosome"/>
</dbReference>
<dbReference type="GO" id="GO:0005829">
    <property type="term" value="C:cytosol"/>
    <property type="evidence" value="ECO:0007669"/>
    <property type="project" value="TreeGrafter"/>
</dbReference>
<dbReference type="GO" id="GO:0051539">
    <property type="term" value="F:4 iron, 4 sulfur cluster binding"/>
    <property type="evidence" value="ECO:0007669"/>
    <property type="project" value="UniProtKB-KW"/>
</dbReference>
<dbReference type="GO" id="GO:0016830">
    <property type="term" value="F:carbon-carbon lyase activity"/>
    <property type="evidence" value="ECO:0007669"/>
    <property type="project" value="InterPro"/>
</dbReference>
<dbReference type="GO" id="GO:0008270">
    <property type="term" value="F:zinc ion binding"/>
    <property type="evidence" value="ECO:0007669"/>
    <property type="project" value="UniProtKB-UniRule"/>
</dbReference>
<dbReference type="GO" id="GO:0009228">
    <property type="term" value="P:thiamine biosynthetic process"/>
    <property type="evidence" value="ECO:0007669"/>
    <property type="project" value="UniProtKB-KW"/>
</dbReference>
<dbReference type="GO" id="GO:0009229">
    <property type="term" value="P:thiamine diphosphate biosynthetic process"/>
    <property type="evidence" value="ECO:0007669"/>
    <property type="project" value="UniProtKB-UniRule"/>
</dbReference>
<dbReference type="FunFam" id="3.20.20.540:FF:000001">
    <property type="entry name" value="Phosphomethylpyrimidine synthase"/>
    <property type="match status" value="1"/>
</dbReference>
<dbReference type="Gene3D" id="6.10.250.620">
    <property type="match status" value="1"/>
</dbReference>
<dbReference type="Gene3D" id="3.20.20.540">
    <property type="entry name" value="Radical SAM ThiC family, central domain"/>
    <property type="match status" value="1"/>
</dbReference>
<dbReference type="HAMAP" id="MF_00089">
    <property type="entry name" value="ThiC"/>
    <property type="match status" value="1"/>
</dbReference>
<dbReference type="InterPro" id="IPR037509">
    <property type="entry name" value="ThiC"/>
</dbReference>
<dbReference type="InterPro" id="IPR025747">
    <property type="entry name" value="ThiC-associated_dom"/>
</dbReference>
<dbReference type="InterPro" id="IPR038521">
    <property type="entry name" value="ThiC/Bza_core_dom"/>
</dbReference>
<dbReference type="InterPro" id="IPR002817">
    <property type="entry name" value="ThiC/BzaA/B"/>
</dbReference>
<dbReference type="NCBIfam" id="NF006763">
    <property type="entry name" value="PRK09284.1"/>
    <property type="match status" value="1"/>
</dbReference>
<dbReference type="NCBIfam" id="NF009895">
    <property type="entry name" value="PRK13352.1"/>
    <property type="match status" value="1"/>
</dbReference>
<dbReference type="NCBIfam" id="TIGR00190">
    <property type="entry name" value="thiC"/>
    <property type="match status" value="1"/>
</dbReference>
<dbReference type="PANTHER" id="PTHR30557:SF1">
    <property type="entry name" value="PHOSPHOMETHYLPYRIMIDINE SYNTHASE, CHLOROPLASTIC"/>
    <property type="match status" value="1"/>
</dbReference>
<dbReference type="PANTHER" id="PTHR30557">
    <property type="entry name" value="THIAMINE BIOSYNTHESIS PROTEIN THIC"/>
    <property type="match status" value="1"/>
</dbReference>
<dbReference type="Pfam" id="PF13667">
    <property type="entry name" value="ThiC-associated"/>
    <property type="match status" value="1"/>
</dbReference>
<dbReference type="Pfam" id="PF01964">
    <property type="entry name" value="ThiC_Rad_SAM"/>
    <property type="match status" value="1"/>
</dbReference>
<dbReference type="SFLD" id="SFLDF00407">
    <property type="entry name" value="phosphomethylpyrimidine_syntha"/>
    <property type="match status" value="1"/>
</dbReference>
<dbReference type="SFLD" id="SFLDG01114">
    <property type="entry name" value="phosphomethylpyrimidine_syntha"/>
    <property type="match status" value="1"/>
</dbReference>
<dbReference type="SFLD" id="SFLDS00113">
    <property type="entry name" value="Radical_SAM_Phosphomethylpyrim"/>
    <property type="match status" value="1"/>
</dbReference>
<accession>Q4KJA1</accession>
<name>THIC_PSEF5</name>
<comment type="function">
    <text evidence="1">Catalyzes the synthesis of the hydroxymethylpyrimidine phosphate (HMP-P) moiety of thiamine from aminoimidazole ribotide (AIR) in a radical S-adenosyl-L-methionine (SAM)-dependent reaction.</text>
</comment>
<comment type="catalytic activity">
    <reaction evidence="1">
        <text>5-amino-1-(5-phospho-beta-D-ribosyl)imidazole + S-adenosyl-L-methionine = 4-amino-2-methyl-5-(phosphooxymethyl)pyrimidine + CO + 5'-deoxyadenosine + formate + L-methionine + 3 H(+)</text>
        <dbReference type="Rhea" id="RHEA:24840"/>
        <dbReference type="ChEBI" id="CHEBI:15378"/>
        <dbReference type="ChEBI" id="CHEBI:15740"/>
        <dbReference type="ChEBI" id="CHEBI:17245"/>
        <dbReference type="ChEBI" id="CHEBI:17319"/>
        <dbReference type="ChEBI" id="CHEBI:57844"/>
        <dbReference type="ChEBI" id="CHEBI:58354"/>
        <dbReference type="ChEBI" id="CHEBI:59789"/>
        <dbReference type="ChEBI" id="CHEBI:137981"/>
        <dbReference type="EC" id="4.1.99.17"/>
    </reaction>
</comment>
<comment type="cofactor">
    <cofactor evidence="1">
        <name>[4Fe-4S] cluster</name>
        <dbReference type="ChEBI" id="CHEBI:49883"/>
    </cofactor>
    <text evidence="1">Binds 1 [4Fe-4S] cluster per subunit. The cluster is coordinated with 3 cysteines and an exchangeable S-adenosyl-L-methionine.</text>
</comment>
<comment type="pathway">
    <text evidence="1">Cofactor biosynthesis; thiamine diphosphate biosynthesis.</text>
</comment>
<comment type="subunit">
    <text evidence="1">Homodimer.</text>
</comment>
<comment type="similarity">
    <text evidence="1">Belongs to the ThiC family.</text>
</comment>
<gene>
    <name evidence="1" type="primary">thiC</name>
    <name type="ordered locus">PFL_0538</name>
</gene>
<evidence type="ECO:0000255" key="1">
    <source>
        <dbReference type="HAMAP-Rule" id="MF_00089"/>
    </source>
</evidence>
<evidence type="ECO:0000256" key="2">
    <source>
        <dbReference type="SAM" id="MobiDB-lite"/>
    </source>
</evidence>
<organism>
    <name type="scientific">Pseudomonas fluorescens (strain ATCC BAA-477 / NRRL B-23932 / Pf-5)</name>
    <dbReference type="NCBI Taxonomy" id="220664"/>
    <lineage>
        <taxon>Bacteria</taxon>
        <taxon>Pseudomonadati</taxon>
        <taxon>Pseudomonadota</taxon>
        <taxon>Gammaproteobacteria</taxon>
        <taxon>Pseudomonadales</taxon>
        <taxon>Pseudomonadaceae</taxon>
        <taxon>Pseudomonas</taxon>
    </lineage>
</organism>
<keyword id="KW-0004">4Fe-4S</keyword>
<keyword id="KW-0408">Iron</keyword>
<keyword id="KW-0411">Iron-sulfur</keyword>
<keyword id="KW-0456">Lyase</keyword>
<keyword id="KW-0479">Metal-binding</keyword>
<keyword id="KW-0949">S-adenosyl-L-methionine</keyword>
<keyword id="KW-0784">Thiamine biosynthesis</keyword>
<keyword id="KW-0862">Zinc</keyword>
<sequence>MTTKLKNASNLSESAQVDQQSVQPFTRSQKVYVQGSRPDIRVPMREITLDVTPTDFGGEINAPVTVYDTSGPYTDPNVVIDVRKGLGDVRSAWIEDRGDTERLAGLSSNFGQQRLADPELTKLRFAHVNNPRRAKAGANVSQMHYARKGIITAEMEYVAIRENMKLQEARAAGLLKQQHAGHSFGASIPKEITPEFVREEIARGRAIIPANINHVELEPMIIGRNFLVKINGNIGNSALGSSIEEEVAKLTWGIRWGSDTVMDLSTGKHIHETREWIIRNSPVPIGTVPIYQALEKVNGVAEDLTWELFRDTLIEQAEQGVDYFTIHAGVLLRYVPLTAKRVTGIVSRGGSIMAKWCLAHHKENFLYTHFDEICEIMKAYDVSFSLGDGLRPGSIADANDEAQFGELETLGELTKIAWKHDVQCMIEGPGHVPMQLIKENMDKQLECCDEAPFYTLGPLTTDIAPGYDHITSGIGAAMIGWFGCAMLCYVTPKEHLGLPNKDDVKTGIITYKIAAHAADLAKGHPGAQIRDNALSKARFEFRWEDQFNLGLDPDTARSYHDETLPKDSAKVAHFCSMCGPKFCSMKITQEVREYAANQRIEAVDVDVAKGLAEQAERFKQEGSQLYKKV</sequence>
<feature type="chain" id="PRO_0000242287" description="Phosphomethylpyrimidine synthase">
    <location>
        <begin position="1"/>
        <end position="629"/>
    </location>
</feature>
<feature type="region of interest" description="Disordered" evidence="2">
    <location>
        <begin position="1"/>
        <end position="30"/>
    </location>
</feature>
<feature type="binding site" evidence="1">
    <location>
        <position position="233"/>
    </location>
    <ligand>
        <name>substrate</name>
    </ligand>
</feature>
<feature type="binding site" evidence="1">
    <location>
        <position position="262"/>
    </location>
    <ligand>
        <name>substrate</name>
    </ligand>
</feature>
<feature type="binding site" evidence="1">
    <location>
        <position position="291"/>
    </location>
    <ligand>
        <name>substrate</name>
    </ligand>
</feature>
<feature type="binding site" evidence="1">
    <location>
        <position position="327"/>
    </location>
    <ligand>
        <name>substrate</name>
    </ligand>
</feature>
<feature type="binding site" evidence="1">
    <location>
        <begin position="347"/>
        <end position="349"/>
    </location>
    <ligand>
        <name>substrate</name>
    </ligand>
</feature>
<feature type="binding site" evidence="1">
    <location>
        <begin position="388"/>
        <end position="391"/>
    </location>
    <ligand>
        <name>substrate</name>
    </ligand>
</feature>
<feature type="binding site" evidence="1">
    <location>
        <position position="427"/>
    </location>
    <ligand>
        <name>substrate</name>
    </ligand>
</feature>
<feature type="binding site" evidence="1">
    <location>
        <position position="431"/>
    </location>
    <ligand>
        <name>Zn(2+)</name>
        <dbReference type="ChEBI" id="CHEBI:29105"/>
    </ligand>
</feature>
<feature type="binding site" evidence="1">
    <location>
        <position position="454"/>
    </location>
    <ligand>
        <name>substrate</name>
    </ligand>
</feature>
<feature type="binding site" evidence="1">
    <location>
        <position position="495"/>
    </location>
    <ligand>
        <name>Zn(2+)</name>
        <dbReference type="ChEBI" id="CHEBI:29105"/>
    </ligand>
</feature>
<feature type="binding site" evidence="1">
    <location>
        <position position="575"/>
    </location>
    <ligand>
        <name>[4Fe-4S] cluster</name>
        <dbReference type="ChEBI" id="CHEBI:49883"/>
        <note>4Fe-4S-S-AdoMet</note>
    </ligand>
</feature>
<feature type="binding site" evidence="1">
    <location>
        <position position="578"/>
    </location>
    <ligand>
        <name>[4Fe-4S] cluster</name>
        <dbReference type="ChEBI" id="CHEBI:49883"/>
        <note>4Fe-4S-S-AdoMet</note>
    </ligand>
</feature>
<feature type="binding site" evidence="1">
    <location>
        <position position="583"/>
    </location>
    <ligand>
        <name>[4Fe-4S] cluster</name>
        <dbReference type="ChEBI" id="CHEBI:49883"/>
        <note>4Fe-4S-S-AdoMet</note>
    </ligand>
</feature>
<proteinExistence type="inferred from homology"/>
<protein>
    <recommendedName>
        <fullName evidence="1">Phosphomethylpyrimidine synthase</fullName>
        <ecNumber evidence="1">4.1.99.17</ecNumber>
    </recommendedName>
    <alternativeName>
        <fullName evidence="1">Hydroxymethylpyrimidine phosphate synthase</fullName>
        <shortName evidence="1">HMP-P synthase</shortName>
        <shortName evidence="1">HMP-phosphate synthase</shortName>
        <shortName evidence="1">HMPP synthase</shortName>
    </alternativeName>
    <alternativeName>
        <fullName evidence="1">Thiamine biosynthesis protein ThiC</fullName>
    </alternativeName>
</protein>
<reference key="1">
    <citation type="journal article" date="2005" name="Nat. Biotechnol.">
        <title>Complete genome sequence of the plant commensal Pseudomonas fluorescens Pf-5.</title>
        <authorList>
            <person name="Paulsen I.T."/>
            <person name="Press C.M."/>
            <person name="Ravel J."/>
            <person name="Kobayashi D.Y."/>
            <person name="Myers G.S.A."/>
            <person name="Mavrodi D.V."/>
            <person name="DeBoy R.T."/>
            <person name="Seshadri R."/>
            <person name="Ren Q."/>
            <person name="Madupu R."/>
            <person name="Dodson R.J."/>
            <person name="Durkin A.S."/>
            <person name="Brinkac L.M."/>
            <person name="Daugherty S.C."/>
            <person name="Sullivan S.A."/>
            <person name="Rosovitz M.J."/>
            <person name="Gwinn M.L."/>
            <person name="Zhou L."/>
            <person name="Schneider D.J."/>
            <person name="Cartinhour S.W."/>
            <person name="Nelson W.C."/>
            <person name="Weidman J."/>
            <person name="Watkins K."/>
            <person name="Tran K."/>
            <person name="Khouri H."/>
            <person name="Pierson E.A."/>
            <person name="Pierson L.S. III"/>
            <person name="Thomashow L.S."/>
            <person name="Loper J.E."/>
        </authorList>
    </citation>
    <scope>NUCLEOTIDE SEQUENCE [LARGE SCALE GENOMIC DNA]</scope>
    <source>
        <strain>ATCC BAA-477 / NRRL B-23932 / Pf-5</strain>
    </source>
</reference>